<proteinExistence type="inferred from homology"/>
<name>PRMA_THEMA</name>
<keyword id="KW-0963">Cytoplasm</keyword>
<keyword id="KW-0489">Methyltransferase</keyword>
<keyword id="KW-1185">Reference proteome</keyword>
<keyword id="KW-0949">S-adenosyl-L-methionine</keyword>
<keyword id="KW-0808">Transferase</keyword>
<feature type="chain" id="PRO_0000192326" description="Ribosomal protein L11 methyltransferase">
    <location>
        <begin position="1"/>
        <end position="264"/>
    </location>
</feature>
<feature type="binding site" evidence="1">
    <location>
        <position position="116"/>
    </location>
    <ligand>
        <name>S-adenosyl-L-methionine</name>
        <dbReference type="ChEBI" id="CHEBI:59789"/>
    </ligand>
</feature>
<feature type="binding site" evidence="1">
    <location>
        <position position="137"/>
    </location>
    <ligand>
        <name>S-adenosyl-L-methionine</name>
        <dbReference type="ChEBI" id="CHEBI:59789"/>
    </ligand>
</feature>
<feature type="binding site" evidence="1">
    <location>
        <position position="159"/>
    </location>
    <ligand>
        <name>S-adenosyl-L-methionine</name>
        <dbReference type="ChEBI" id="CHEBI:59789"/>
    </ligand>
</feature>
<feature type="binding site" evidence="1">
    <location>
        <position position="200"/>
    </location>
    <ligand>
        <name>S-adenosyl-L-methionine</name>
        <dbReference type="ChEBI" id="CHEBI:59789"/>
    </ligand>
</feature>
<organism>
    <name type="scientific">Thermotoga maritima (strain ATCC 43589 / DSM 3109 / JCM 10099 / NBRC 100826 / MSB8)</name>
    <dbReference type="NCBI Taxonomy" id="243274"/>
    <lineage>
        <taxon>Bacteria</taxon>
        <taxon>Thermotogati</taxon>
        <taxon>Thermotogota</taxon>
        <taxon>Thermotogae</taxon>
        <taxon>Thermotogales</taxon>
        <taxon>Thermotogaceae</taxon>
        <taxon>Thermotoga</taxon>
    </lineage>
</organism>
<dbReference type="EC" id="2.1.1.-" evidence="1"/>
<dbReference type="EMBL" id="AE000512">
    <property type="protein sequence ID" value="AAD36156.1"/>
    <property type="molecule type" value="Genomic_DNA"/>
</dbReference>
<dbReference type="PIR" id="G72296">
    <property type="entry name" value="G72296"/>
</dbReference>
<dbReference type="RefSeq" id="NP_228885.1">
    <property type="nucleotide sequence ID" value="NC_000853.1"/>
</dbReference>
<dbReference type="RefSeq" id="WP_004080406.1">
    <property type="nucleotide sequence ID" value="NZ_CP011107.1"/>
</dbReference>
<dbReference type="SMR" id="Q9X0G8"/>
<dbReference type="FunCoup" id="Q9X0G8">
    <property type="interactions" value="272"/>
</dbReference>
<dbReference type="STRING" id="243274.TM_1079"/>
<dbReference type="PaxDb" id="243274-THEMA_08960"/>
<dbReference type="EnsemblBacteria" id="AAD36156">
    <property type="protein sequence ID" value="AAD36156"/>
    <property type="gene ID" value="TM_1079"/>
</dbReference>
<dbReference type="KEGG" id="tma:TM1079"/>
<dbReference type="KEGG" id="tmi:THEMA_08960"/>
<dbReference type="KEGG" id="tmm:Tmari_1083"/>
<dbReference type="KEGG" id="tmw:THMA_1101"/>
<dbReference type="eggNOG" id="COG2264">
    <property type="taxonomic scope" value="Bacteria"/>
</dbReference>
<dbReference type="InParanoid" id="Q9X0G8"/>
<dbReference type="OrthoDB" id="9785995at2"/>
<dbReference type="Proteomes" id="UP000008183">
    <property type="component" value="Chromosome"/>
</dbReference>
<dbReference type="GO" id="GO:0005737">
    <property type="term" value="C:cytoplasm"/>
    <property type="evidence" value="ECO:0007669"/>
    <property type="project" value="UniProtKB-SubCell"/>
</dbReference>
<dbReference type="GO" id="GO:0008276">
    <property type="term" value="F:protein methyltransferase activity"/>
    <property type="evidence" value="ECO:0000318"/>
    <property type="project" value="GO_Central"/>
</dbReference>
<dbReference type="GO" id="GO:0016279">
    <property type="term" value="F:protein-lysine N-methyltransferase activity"/>
    <property type="evidence" value="ECO:0007669"/>
    <property type="project" value="RHEA"/>
</dbReference>
<dbReference type="GO" id="GO:0032259">
    <property type="term" value="P:methylation"/>
    <property type="evidence" value="ECO:0007669"/>
    <property type="project" value="UniProtKB-KW"/>
</dbReference>
<dbReference type="CDD" id="cd02440">
    <property type="entry name" value="AdoMet_MTases"/>
    <property type="match status" value="1"/>
</dbReference>
<dbReference type="Gene3D" id="3.40.50.150">
    <property type="entry name" value="Vaccinia Virus protein VP39"/>
    <property type="match status" value="1"/>
</dbReference>
<dbReference type="HAMAP" id="MF_00735">
    <property type="entry name" value="Methyltr_PrmA"/>
    <property type="match status" value="1"/>
</dbReference>
<dbReference type="InterPro" id="IPR050078">
    <property type="entry name" value="Ribosomal_L11_MeTrfase_PrmA"/>
</dbReference>
<dbReference type="InterPro" id="IPR004498">
    <property type="entry name" value="Ribosomal_PrmA_MeTrfase"/>
</dbReference>
<dbReference type="InterPro" id="IPR029063">
    <property type="entry name" value="SAM-dependent_MTases_sf"/>
</dbReference>
<dbReference type="PANTHER" id="PTHR43648">
    <property type="entry name" value="ELECTRON TRANSFER FLAVOPROTEIN BETA SUBUNIT LYSINE METHYLTRANSFERASE"/>
    <property type="match status" value="1"/>
</dbReference>
<dbReference type="PANTHER" id="PTHR43648:SF1">
    <property type="entry name" value="ELECTRON TRANSFER FLAVOPROTEIN BETA SUBUNIT LYSINE METHYLTRANSFERASE"/>
    <property type="match status" value="1"/>
</dbReference>
<dbReference type="Pfam" id="PF06325">
    <property type="entry name" value="PrmA"/>
    <property type="match status" value="1"/>
</dbReference>
<dbReference type="PIRSF" id="PIRSF000401">
    <property type="entry name" value="RPL11_MTase"/>
    <property type="match status" value="1"/>
</dbReference>
<dbReference type="SUPFAM" id="SSF53335">
    <property type="entry name" value="S-adenosyl-L-methionine-dependent methyltransferases"/>
    <property type="match status" value="1"/>
</dbReference>
<sequence length="264" mass="30280">MRFKELILPLKIEEEELVEKFYEEGFFNFAIEEDKKGKKVLKIYLREGEPLPDFLKDWEIVDEKITTPKDWIVELEPFEIVEGIFIDPTEKINRRDAIVIKLSPGVAFGTGLHPTTRMSVFFLKKYLKEGNTVLDVGCGTGILAIAAKKLGASRVVAVDVDEQAVEVAEENVRKNDVDVLVKWSDLLSEVEGTFDIVVSNILAEIHVKLLEDVNRVTHRDSMLILSGIVDRKEDMVKRKASEHGWNVLERKQEREWVTLVMKRS</sequence>
<comment type="function">
    <text evidence="1">Methylates ribosomal protein L11.</text>
</comment>
<comment type="catalytic activity">
    <reaction evidence="1">
        <text>L-lysyl-[protein] + 3 S-adenosyl-L-methionine = N(6),N(6),N(6)-trimethyl-L-lysyl-[protein] + 3 S-adenosyl-L-homocysteine + 3 H(+)</text>
        <dbReference type="Rhea" id="RHEA:54192"/>
        <dbReference type="Rhea" id="RHEA-COMP:9752"/>
        <dbReference type="Rhea" id="RHEA-COMP:13826"/>
        <dbReference type="ChEBI" id="CHEBI:15378"/>
        <dbReference type="ChEBI" id="CHEBI:29969"/>
        <dbReference type="ChEBI" id="CHEBI:57856"/>
        <dbReference type="ChEBI" id="CHEBI:59789"/>
        <dbReference type="ChEBI" id="CHEBI:61961"/>
    </reaction>
</comment>
<comment type="subcellular location">
    <subcellularLocation>
        <location evidence="1">Cytoplasm</location>
    </subcellularLocation>
</comment>
<comment type="similarity">
    <text evidence="1">Belongs to the methyltransferase superfamily. PrmA family.</text>
</comment>
<gene>
    <name evidence="1" type="primary">prmA</name>
    <name type="ordered locus">TM_1079</name>
</gene>
<protein>
    <recommendedName>
        <fullName evidence="1">Ribosomal protein L11 methyltransferase</fullName>
        <shortName evidence="1">L11 Mtase</shortName>
        <ecNumber evidence="1">2.1.1.-</ecNumber>
    </recommendedName>
</protein>
<reference key="1">
    <citation type="journal article" date="1999" name="Nature">
        <title>Evidence for lateral gene transfer between Archaea and Bacteria from genome sequence of Thermotoga maritima.</title>
        <authorList>
            <person name="Nelson K.E."/>
            <person name="Clayton R.A."/>
            <person name="Gill S.R."/>
            <person name="Gwinn M.L."/>
            <person name="Dodson R.J."/>
            <person name="Haft D.H."/>
            <person name="Hickey E.K."/>
            <person name="Peterson J.D."/>
            <person name="Nelson W.C."/>
            <person name="Ketchum K.A."/>
            <person name="McDonald L.A."/>
            <person name="Utterback T.R."/>
            <person name="Malek J.A."/>
            <person name="Linher K.D."/>
            <person name="Garrett M.M."/>
            <person name="Stewart A.M."/>
            <person name="Cotton M.D."/>
            <person name="Pratt M.S."/>
            <person name="Phillips C.A."/>
            <person name="Richardson D.L."/>
            <person name="Heidelberg J.F."/>
            <person name="Sutton G.G."/>
            <person name="Fleischmann R.D."/>
            <person name="Eisen J.A."/>
            <person name="White O."/>
            <person name="Salzberg S.L."/>
            <person name="Smith H.O."/>
            <person name="Venter J.C."/>
            <person name="Fraser C.M."/>
        </authorList>
    </citation>
    <scope>NUCLEOTIDE SEQUENCE [LARGE SCALE GENOMIC DNA]</scope>
    <source>
        <strain>ATCC 43589 / DSM 3109 / JCM 10099 / NBRC 100826 / MSB8</strain>
    </source>
</reference>
<evidence type="ECO:0000255" key="1">
    <source>
        <dbReference type="HAMAP-Rule" id="MF_00735"/>
    </source>
</evidence>
<accession>Q9X0G8</accession>